<reference key="1">
    <citation type="journal article" date="2000" name="Nature">
        <title>The genome sequence of the food-borne pathogen Campylobacter jejuni reveals hypervariable sequences.</title>
        <authorList>
            <person name="Parkhill J."/>
            <person name="Wren B.W."/>
            <person name="Mungall K.L."/>
            <person name="Ketley J.M."/>
            <person name="Churcher C.M."/>
            <person name="Basham D."/>
            <person name="Chillingworth T."/>
            <person name="Davies R.M."/>
            <person name="Feltwell T."/>
            <person name="Holroyd S."/>
            <person name="Jagels K."/>
            <person name="Karlyshev A.V."/>
            <person name="Moule S."/>
            <person name="Pallen M.J."/>
            <person name="Penn C.W."/>
            <person name="Quail M.A."/>
            <person name="Rajandream M.A."/>
            <person name="Rutherford K.M."/>
            <person name="van Vliet A.H.M."/>
            <person name="Whitehead S."/>
            <person name="Barrell B.G."/>
        </authorList>
    </citation>
    <scope>NUCLEOTIDE SEQUENCE [LARGE SCALE GENOMIC DNA]</scope>
    <source>
        <strain>ATCC 700819 / NCTC 11168</strain>
    </source>
</reference>
<proteinExistence type="evidence at protein level"/>
<sequence length="279" mass="32331">MKLCVALDLSTKEECLQLAKELKNLDIWLKVGLRAYLRDGFKFIEELKKVDDFKIFLDLKFHDIPNTMADACEEVSKLGVDMINIHASAGKIAIQEVMTRLSKFSKRPLVLAVSALTSFDEENFFSIYRQKIEEAVINFSKISYENGLDGMVCSVFESKKIKEHTSSNFLTLTPGIRPFGETNDDQKRVANLAMARENLSDYIVVGRPIYKNENPRAVCEKILNKIHRKNISENDIEQNYEVIQQKEWDMCNHFEEWIKTRPDKEHALKEFYAKCGIKY</sequence>
<name>PYRF_CAMJE</name>
<gene>
    <name evidence="1" type="primary">pyrF</name>
    <name type="ordered locus">Cj0381c</name>
</gene>
<keyword id="KW-0002">3D-structure</keyword>
<keyword id="KW-0210">Decarboxylase</keyword>
<keyword id="KW-0456">Lyase</keyword>
<keyword id="KW-0665">Pyrimidine biosynthesis</keyword>
<keyword id="KW-1185">Reference proteome</keyword>
<comment type="function">
    <text evidence="1">Catalyzes the decarboxylation of orotidine 5'-monophosphate (OMP) to uridine 5'-monophosphate (UMP).</text>
</comment>
<comment type="catalytic activity">
    <reaction evidence="1">
        <text>orotidine 5'-phosphate + H(+) = UMP + CO2</text>
        <dbReference type="Rhea" id="RHEA:11596"/>
        <dbReference type="ChEBI" id="CHEBI:15378"/>
        <dbReference type="ChEBI" id="CHEBI:16526"/>
        <dbReference type="ChEBI" id="CHEBI:57538"/>
        <dbReference type="ChEBI" id="CHEBI:57865"/>
        <dbReference type="EC" id="4.1.1.23"/>
    </reaction>
</comment>
<comment type="pathway">
    <text evidence="1">Pyrimidine metabolism; UMP biosynthesis via de novo pathway; UMP from orotate: step 2/2.</text>
</comment>
<comment type="subunit">
    <text evidence="1">Homodimer.</text>
</comment>
<comment type="similarity">
    <text evidence="1">Belongs to the OMP decarboxylase family. Type 1 subfamily.</text>
</comment>
<feature type="chain" id="PRO_0000134535" description="Orotidine 5'-phosphate decarboxylase">
    <location>
        <begin position="1"/>
        <end position="279"/>
    </location>
</feature>
<feature type="active site" description="Proton donor" evidence="1">
    <location>
        <position position="60"/>
    </location>
</feature>
<feature type="binding site" evidence="1">
    <location>
        <position position="8"/>
    </location>
    <ligand>
        <name>substrate</name>
    </ligand>
</feature>
<feature type="binding site" evidence="1">
    <location>
        <position position="30"/>
    </location>
    <ligand>
        <name>substrate</name>
    </ligand>
</feature>
<feature type="binding site" evidence="1">
    <location>
        <begin position="58"/>
        <end position="67"/>
    </location>
    <ligand>
        <name>substrate</name>
    </ligand>
</feature>
<feature type="binding site" evidence="1">
    <location>
        <position position="117"/>
    </location>
    <ligand>
        <name>substrate</name>
    </ligand>
</feature>
<feature type="binding site" evidence="1">
    <location>
        <position position="177"/>
    </location>
    <ligand>
        <name>substrate</name>
    </ligand>
</feature>
<feature type="binding site" evidence="1">
    <location>
        <position position="186"/>
    </location>
    <ligand>
        <name>substrate</name>
    </ligand>
</feature>
<feature type="binding site" evidence="1">
    <location>
        <position position="206"/>
    </location>
    <ligand>
        <name>substrate</name>
    </ligand>
</feature>
<feature type="binding site" evidence="1">
    <location>
        <position position="207"/>
    </location>
    <ligand>
        <name>substrate</name>
    </ligand>
</feature>
<feature type="strand" evidence="2">
    <location>
        <begin position="2"/>
        <end position="6"/>
    </location>
</feature>
<feature type="helix" evidence="2">
    <location>
        <begin position="12"/>
        <end position="21"/>
    </location>
</feature>
<feature type="turn" evidence="2">
    <location>
        <begin position="22"/>
        <end position="24"/>
    </location>
</feature>
<feature type="strand" evidence="2">
    <location>
        <begin position="28"/>
        <end position="31"/>
    </location>
</feature>
<feature type="helix" evidence="2">
    <location>
        <begin position="33"/>
        <end position="39"/>
    </location>
</feature>
<feature type="helix" evidence="2">
    <location>
        <begin position="41"/>
        <end position="50"/>
    </location>
</feature>
<feature type="strand" evidence="2">
    <location>
        <begin position="54"/>
        <end position="61"/>
    </location>
</feature>
<feature type="helix" evidence="2">
    <location>
        <begin position="65"/>
        <end position="76"/>
    </location>
</feature>
<feature type="turn" evidence="2">
    <location>
        <begin position="77"/>
        <end position="79"/>
    </location>
</feature>
<feature type="strand" evidence="2">
    <location>
        <begin position="81"/>
        <end position="86"/>
    </location>
</feature>
<feature type="helix" evidence="2">
    <location>
        <begin position="87"/>
        <end position="89"/>
    </location>
</feature>
<feature type="helix" evidence="2">
    <location>
        <begin position="91"/>
        <end position="101"/>
    </location>
</feature>
<feature type="strand" evidence="2">
    <location>
        <begin position="104"/>
        <end position="106"/>
    </location>
</feature>
<feature type="strand" evidence="2">
    <location>
        <begin position="109"/>
        <end position="113"/>
    </location>
</feature>
<feature type="helix" evidence="2">
    <location>
        <begin position="121"/>
        <end position="128"/>
    </location>
</feature>
<feature type="helix" evidence="2">
    <location>
        <begin position="132"/>
        <end position="145"/>
    </location>
</feature>
<feature type="strand" evidence="2">
    <location>
        <begin position="149"/>
        <end position="152"/>
    </location>
</feature>
<feature type="turn" evidence="2">
    <location>
        <begin position="155"/>
        <end position="157"/>
    </location>
</feature>
<feature type="helix" evidence="2">
    <location>
        <begin position="158"/>
        <end position="164"/>
    </location>
</feature>
<feature type="strand" evidence="2">
    <location>
        <begin position="169"/>
        <end position="173"/>
    </location>
</feature>
<feature type="helix" evidence="2">
    <location>
        <begin position="192"/>
        <end position="197"/>
    </location>
</feature>
<feature type="strand" evidence="2">
    <location>
        <begin position="201"/>
        <end position="205"/>
    </location>
</feature>
<feature type="helix" evidence="2">
    <location>
        <begin position="207"/>
        <end position="210"/>
    </location>
</feature>
<feature type="helix" evidence="2">
    <location>
        <begin position="215"/>
        <end position="226"/>
    </location>
</feature>
<organism>
    <name type="scientific">Campylobacter jejuni subsp. jejuni serotype O:2 (strain ATCC 700819 / NCTC 11168)</name>
    <dbReference type="NCBI Taxonomy" id="192222"/>
    <lineage>
        <taxon>Bacteria</taxon>
        <taxon>Pseudomonadati</taxon>
        <taxon>Campylobacterota</taxon>
        <taxon>Epsilonproteobacteria</taxon>
        <taxon>Campylobacterales</taxon>
        <taxon>Campylobacteraceae</taxon>
        <taxon>Campylobacter</taxon>
    </lineage>
</organism>
<evidence type="ECO:0000255" key="1">
    <source>
        <dbReference type="HAMAP-Rule" id="MF_01200"/>
    </source>
</evidence>
<evidence type="ECO:0007829" key="2">
    <source>
        <dbReference type="PDB" id="3RU6"/>
    </source>
</evidence>
<dbReference type="EC" id="4.1.1.23" evidence="1"/>
<dbReference type="EMBL" id="AL111168">
    <property type="protein sequence ID" value="CAL34531.1"/>
    <property type="molecule type" value="Genomic_DNA"/>
</dbReference>
<dbReference type="PIR" id="C81381">
    <property type="entry name" value="C81381"/>
</dbReference>
<dbReference type="RefSeq" id="WP_002858700.1">
    <property type="nucleotide sequence ID" value="NZ_SZUC01000004.1"/>
</dbReference>
<dbReference type="RefSeq" id="YP_002343818.1">
    <property type="nucleotide sequence ID" value="NC_002163.1"/>
</dbReference>
<dbReference type="PDB" id="3RU6">
    <property type="method" value="X-ray"/>
    <property type="resolution" value="1.80 A"/>
    <property type="chains" value="A/B/C/D=1-279"/>
</dbReference>
<dbReference type="PDBsum" id="3RU6"/>
<dbReference type="SMR" id="Q9PIC1"/>
<dbReference type="IntAct" id="Q9PIC1">
    <property type="interactions" value="23"/>
</dbReference>
<dbReference type="STRING" id="192222.Cj0381c"/>
<dbReference type="PaxDb" id="192222-Cj0381c"/>
<dbReference type="EnsemblBacteria" id="CAL34531">
    <property type="protein sequence ID" value="CAL34531"/>
    <property type="gene ID" value="Cj0381c"/>
</dbReference>
<dbReference type="GeneID" id="904704"/>
<dbReference type="KEGG" id="cje:Cj0381c"/>
<dbReference type="PATRIC" id="fig|192222.6.peg.372"/>
<dbReference type="eggNOG" id="COG0284">
    <property type="taxonomic scope" value="Bacteria"/>
</dbReference>
<dbReference type="HOGENOM" id="CLU_067069_1_1_7"/>
<dbReference type="OrthoDB" id="9806203at2"/>
<dbReference type="UniPathway" id="UPA00070">
    <property type="reaction ID" value="UER00120"/>
</dbReference>
<dbReference type="EvolutionaryTrace" id="Q9PIC1"/>
<dbReference type="Proteomes" id="UP000000799">
    <property type="component" value="Chromosome"/>
</dbReference>
<dbReference type="GO" id="GO:0005829">
    <property type="term" value="C:cytosol"/>
    <property type="evidence" value="ECO:0007669"/>
    <property type="project" value="TreeGrafter"/>
</dbReference>
<dbReference type="GO" id="GO:0004590">
    <property type="term" value="F:orotidine-5'-phosphate decarboxylase activity"/>
    <property type="evidence" value="ECO:0007669"/>
    <property type="project" value="UniProtKB-UniRule"/>
</dbReference>
<dbReference type="GO" id="GO:0006207">
    <property type="term" value="P:'de novo' pyrimidine nucleobase biosynthetic process"/>
    <property type="evidence" value="ECO:0007669"/>
    <property type="project" value="InterPro"/>
</dbReference>
<dbReference type="GO" id="GO:0044205">
    <property type="term" value="P:'de novo' UMP biosynthetic process"/>
    <property type="evidence" value="ECO:0007669"/>
    <property type="project" value="UniProtKB-UniRule"/>
</dbReference>
<dbReference type="CDD" id="cd04725">
    <property type="entry name" value="OMP_decarboxylase_like"/>
    <property type="match status" value="1"/>
</dbReference>
<dbReference type="Gene3D" id="3.20.20.70">
    <property type="entry name" value="Aldolase class I"/>
    <property type="match status" value="1"/>
</dbReference>
<dbReference type="HAMAP" id="MF_01200_B">
    <property type="entry name" value="OMPdecase_type1_B"/>
    <property type="match status" value="1"/>
</dbReference>
<dbReference type="InterPro" id="IPR013785">
    <property type="entry name" value="Aldolase_TIM"/>
</dbReference>
<dbReference type="InterPro" id="IPR014732">
    <property type="entry name" value="OMPdecase"/>
</dbReference>
<dbReference type="InterPro" id="IPR018089">
    <property type="entry name" value="OMPdecase_AS"/>
</dbReference>
<dbReference type="InterPro" id="IPR047596">
    <property type="entry name" value="OMPdecase_bac"/>
</dbReference>
<dbReference type="InterPro" id="IPR001754">
    <property type="entry name" value="OMPdeCOase_dom"/>
</dbReference>
<dbReference type="InterPro" id="IPR011060">
    <property type="entry name" value="RibuloseP-bd_barrel"/>
</dbReference>
<dbReference type="NCBIfam" id="NF001273">
    <property type="entry name" value="PRK00230.1"/>
    <property type="match status" value="1"/>
</dbReference>
<dbReference type="NCBIfam" id="TIGR01740">
    <property type="entry name" value="pyrF"/>
    <property type="match status" value="1"/>
</dbReference>
<dbReference type="PANTHER" id="PTHR32119">
    <property type="entry name" value="OROTIDINE 5'-PHOSPHATE DECARBOXYLASE"/>
    <property type="match status" value="1"/>
</dbReference>
<dbReference type="PANTHER" id="PTHR32119:SF2">
    <property type="entry name" value="OROTIDINE 5'-PHOSPHATE DECARBOXYLASE"/>
    <property type="match status" value="1"/>
</dbReference>
<dbReference type="Pfam" id="PF00215">
    <property type="entry name" value="OMPdecase"/>
    <property type="match status" value="1"/>
</dbReference>
<dbReference type="SMART" id="SM00934">
    <property type="entry name" value="OMPdecase"/>
    <property type="match status" value="1"/>
</dbReference>
<dbReference type="SUPFAM" id="SSF51366">
    <property type="entry name" value="Ribulose-phoshate binding barrel"/>
    <property type="match status" value="1"/>
</dbReference>
<dbReference type="PROSITE" id="PS00156">
    <property type="entry name" value="OMPDECASE"/>
    <property type="match status" value="1"/>
</dbReference>
<accession>Q9PIC1</accession>
<accession>Q0PBC9</accession>
<protein>
    <recommendedName>
        <fullName evidence="1">Orotidine 5'-phosphate decarboxylase</fullName>
        <ecNumber evidence="1">4.1.1.23</ecNumber>
    </recommendedName>
    <alternativeName>
        <fullName evidence="1">OMP decarboxylase</fullName>
        <shortName evidence="1">OMPDCase</shortName>
        <shortName evidence="1">OMPdecase</shortName>
    </alternativeName>
</protein>